<evidence type="ECO:0000250" key="1">
    <source>
        <dbReference type="UniProtKB" id="P04575"/>
    </source>
</evidence>
<evidence type="ECO:0000250" key="2">
    <source>
        <dbReference type="UniProtKB" id="P04633"/>
    </source>
</evidence>
<evidence type="ECO:0000250" key="3">
    <source>
        <dbReference type="UniProtKB" id="P12242"/>
    </source>
</evidence>
<evidence type="ECO:0000250" key="4">
    <source>
        <dbReference type="UniProtKB" id="P25874"/>
    </source>
</evidence>
<evidence type="ECO:0000250" key="5">
    <source>
        <dbReference type="UniProtKB" id="W5PSH7"/>
    </source>
</evidence>
<evidence type="ECO:0000255" key="6"/>
<evidence type="ECO:0000269" key="7">
    <source>
    </source>
</evidence>
<evidence type="ECO:0000303" key="8">
    <source>
    </source>
</evidence>
<evidence type="ECO:0000305" key="9"/>
<sequence length="307" mass="33384">MVSQTTSEVQPTMGVKIFSAGVAACLADIITFPLDTAKVRLQIQGEGQTSSTIRYKGVLGTITTLAKTEGLPKLYSGLPAGIQRQISFASLRIGLYDTVQEYFSSGKETPPTLVNRISAGLMTGGVAVFIGQPTEVVKVRLQAQSHLHGIKPRYTGTYNAYRIIATTESLSTLWKGTTPNLLRNVIINCTELVTYDLMKGALVNNQILADDVPCHLLSALVAGFCTTFLASPADVVKTRFINSLPGQYPSVPSCAMTMFTKEGPTAFFKGFVPSFLRLASWNVIMFVCFEQLKKELMKSRQTVDCTT</sequence>
<dbReference type="EMBL" id="AF271263">
    <property type="protein sequence ID" value="AAG33983.1"/>
    <property type="molecule type" value="mRNA"/>
</dbReference>
<dbReference type="SMR" id="Q9ER18"/>
<dbReference type="GO" id="GO:0005743">
    <property type="term" value="C:mitochondrial inner membrane"/>
    <property type="evidence" value="ECO:0000250"/>
    <property type="project" value="UniProtKB"/>
</dbReference>
<dbReference type="GO" id="GO:1901612">
    <property type="term" value="F:cardiolipin binding"/>
    <property type="evidence" value="ECO:0000250"/>
    <property type="project" value="UniProtKB"/>
</dbReference>
<dbReference type="GO" id="GO:0036041">
    <property type="term" value="F:long-chain fatty acid binding"/>
    <property type="evidence" value="ECO:0000250"/>
    <property type="project" value="UniProtKB"/>
</dbReference>
<dbReference type="GO" id="GO:0017077">
    <property type="term" value="F:oxidative phosphorylation uncoupler activity"/>
    <property type="evidence" value="ECO:0000250"/>
    <property type="project" value="UniProtKB"/>
</dbReference>
<dbReference type="GO" id="GO:0032555">
    <property type="term" value="F:purine ribonucleotide binding"/>
    <property type="evidence" value="ECO:0000250"/>
    <property type="project" value="UniProtKB"/>
</dbReference>
<dbReference type="GO" id="GO:1990845">
    <property type="term" value="P:adaptive thermogenesis"/>
    <property type="evidence" value="ECO:0000250"/>
    <property type="project" value="UniProtKB"/>
</dbReference>
<dbReference type="GO" id="GO:0071398">
    <property type="term" value="P:cellular response to fatty acid"/>
    <property type="evidence" value="ECO:0000250"/>
    <property type="project" value="UniProtKB"/>
</dbReference>
<dbReference type="GO" id="GO:0032870">
    <property type="term" value="P:cellular response to hormone stimulus"/>
    <property type="evidence" value="ECO:0000250"/>
    <property type="project" value="UniProtKB"/>
</dbReference>
<dbReference type="GO" id="GO:0034614">
    <property type="term" value="P:cellular response to reactive oxygen species"/>
    <property type="evidence" value="ECO:0000250"/>
    <property type="project" value="UniProtKB"/>
</dbReference>
<dbReference type="GO" id="GO:1990542">
    <property type="term" value="P:mitochondrial transmembrane transport"/>
    <property type="evidence" value="ECO:0000250"/>
    <property type="project" value="UniProtKB"/>
</dbReference>
<dbReference type="GO" id="GO:1902600">
    <property type="term" value="P:proton transmembrane transport"/>
    <property type="evidence" value="ECO:0000250"/>
    <property type="project" value="UniProtKB"/>
</dbReference>
<dbReference type="GO" id="GO:1903426">
    <property type="term" value="P:regulation of reactive oxygen species biosynthetic process"/>
    <property type="evidence" value="ECO:0000250"/>
    <property type="project" value="UniProtKB"/>
</dbReference>
<dbReference type="GO" id="GO:0031667">
    <property type="term" value="P:response to nutrient levels"/>
    <property type="evidence" value="ECO:0000250"/>
    <property type="project" value="UniProtKB"/>
</dbReference>
<dbReference type="GO" id="GO:0009266">
    <property type="term" value="P:response to temperature stimulus"/>
    <property type="evidence" value="ECO:0000250"/>
    <property type="project" value="UniProtKB"/>
</dbReference>
<dbReference type="FunFam" id="1.50.40.10:FF:000068">
    <property type="entry name" value="Mitochondrial brown fat uncoupling protein 1"/>
    <property type="match status" value="1"/>
</dbReference>
<dbReference type="Gene3D" id="1.50.40.10">
    <property type="entry name" value="Mitochondrial carrier domain"/>
    <property type="match status" value="1"/>
</dbReference>
<dbReference type="InterPro" id="IPR002067">
    <property type="entry name" value="Mit_carrier"/>
</dbReference>
<dbReference type="InterPro" id="IPR050391">
    <property type="entry name" value="Mito_Metabolite_Transporter"/>
</dbReference>
<dbReference type="InterPro" id="IPR018108">
    <property type="entry name" value="Mitochondrial_sb/sol_carrier"/>
</dbReference>
<dbReference type="InterPro" id="IPR023395">
    <property type="entry name" value="Mt_carrier_dom_sf"/>
</dbReference>
<dbReference type="PANTHER" id="PTHR45618">
    <property type="entry name" value="MITOCHONDRIAL DICARBOXYLATE CARRIER-RELATED"/>
    <property type="match status" value="1"/>
</dbReference>
<dbReference type="Pfam" id="PF00153">
    <property type="entry name" value="Mito_carr"/>
    <property type="match status" value="3"/>
</dbReference>
<dbReference type="PRINTS" id="PR00784">
    <property type="entry name" value="MTUNCOUPLING"/>
</dbReference>
<dbReference type="SUPFAM" id="SSF103506">
    <property type="entry name" value="Mitochondrial carrier"/>
    <property type="match status" value="1"/>
</dbReference>
<dbReference type="PROSITE" id="PS50920">
    <property type="entry name" value="SOLCAR"/>
    <property type="match status" value="3"/>
</dbReference>
<proteinExistence type="evidence at transcript level"/>
<comment type="function">
    <text evidence="3">Mitochondrial protein responsible for thermogenic respiration, a specialized capacity of brown adipose tissue and beige fat that participates in non-shivering adaptive thermogenesis to temperature and diet variations and more generally to the regulation of energy balance. Functions as a long-chain fatty acid/LCFA and proton symporter, simultaneously transporting one LCFA and one proton through the inner mitochondrial membrane. However, LCFAs remaining associated with the transporter via their hydrophobic tails, it results in an apparent transport of protons activated by LCFAs. Thereby, dissipates the mitochondrial proton gradient and converts the energy of substrate oxydation into heat instead of ATP. Regulates the production of reactive oxygen species/ROS by mitochondria.</text>
</comment>
<comment type="catalytic activity">
    <reaction evidence="4">
        <text>H(+)(in) = H(+)(out)</text>
        <dbReference type="Rhea" id="RHEA:34979"/>
        <dbReference type="ChEBI" id="CHEBI:15378"/>
    </reaction>
</comment>
<comment type="activity regulation">
    <text evidence="3">Has no constitutive proton transporter activity and has to be activated by long-chain fatty acids/LCFAs. Inhibited by purine nucleotides. Both purine nucleotides and LCFAs bind the cytosolic side of the transporter and directly compete to activate or inhibit it. Activated by noradrenaline and reactive oxygen species. Despite lacking canonical translational encoding for selenocysteine, a small pool of the protein has been observed to selectively incorporate selenocysteine at 'Cys-254'. Selenocysteine-modified protein is highly sensitive to redox modification and may constitute a pool of protein highly sensitive to activation by elevated levels of reactive oxygen species (ROS).</text>
</comment>
<comment type="subunit">
    <text evidence="4 5">Most probably functions as a monomer. Binds one purine nucleotide per monomer. However, has also been suggested to function as a homodimer or a homotetramer. Tightly associates with cardiolipin in the mitochondrion inner membrane; may stabilize and regulate its activity.</text>
</comment>
<comment type="subcellular location">
    <subcellularLocation>
        <location evidence="3">Mitochondrion inner membrane</location>
        <topology evidence="2">Multi-pass membrane protein</topology>
    </subcellularLocation>
</comment>
<comment type="tissue specificity">
    <text evidence="7">Brown adipose tissue.</text>
</comment>
<comment type="PTM">
    <text evidence="3">May undergo sulfenylation upon cold exposure. May increase the sensitivity of UCP1 thermogenic function to the activation by noradrenaline probably through structural effects.</text>
</comment>
<comment type="PTM">
    <text evidence="2">May undergo ubiquitin-mediated proteasomal degradation.</text>
</comment>
<comment type="similarity">
    <text evidence="9">Belongs to the mitochondrial carrier (TC 2.A.29) family.</text>
</comment>
<accession>Q9ER18</accession>
<gene>
    <name evidence="8" type="primary">UCP1</name>
    <name evidence="4" type="synonym">SLC25A7</name>
</gene>
<organism>
    <name type="scientific">Phodopus sungorus</name>
    <name type="common">Striped hairy-footed hamster</name>
    <name type="synonym">Djungarian hamster</name>
    <dbReference type="NCBI Taxonomy" id="10044"/>
    <lineage>
        <taxon>Eukaryota</taxon>
        <taxon>Metazoa</taxon>
        <taxon>Chordata</taxon>
        <taxon>Craniata</taxon>
        <taxon>Vertebrata</taxon>
        <taxon>Euteleostomi</taxon>
        <taxon>Mammalia</taxon>
        <taxon>Eutheria</taxon>
        <taxon>Euarchontoglires</taxon>
        <taxon>Glires</taxon>
        <taxon>Rodentia</taxon>
        <taxon>Myomorpha</taxon>
        <taxon>Muroidea</taxon>
        <taxon>Cricetidae</taxon>
        <taxon>Cricetinae</taxon>
        <taxon>Phodopus</taxon>
    </lineage>
</organism>
<keyword id="KW-0407">Ion channel</keyword>
<keyword id="KW-0406">Ion transport</keyword>
<keyword id="KW-0472">Membrane</keyword>
<keyword id="KW-0496">Mitochondrion</keyword>
<keyword id="KW-0999">Mitochondrion inner membrane</keyword>
<keyword id="KW-0558">Oxidation</keyword>
<keyword id="KW-0677">Repeat</keyword>
<keyword id="KW-0812">Transmembrane</keyword>
<keyword id="KW-1133">Transmembrane helix</keyword>
<keyword id="KW-0813">Transport</keyword>
<name>UCP1_PHOSU</name>
<feature type="chain" id="PRO_0000090660" description="Mitochondrial brown fat uncoupling protein 1">
    <location>
        <begin position="1"/>
        <end position="307"/>
    </location>
</feature>
<feature type="topological domain" description="Mitochondrial intermembrane" evidence="2">
    <location>
        <begin position="1"/>
        <end position="10"/>
    </location>
</feature>
<feature type="transmembrane region" description="Helical; Name=1" evidence="6">
    <location>
        <begin position="11"/>
        <end position="32"/>
    </location>
</feature>
<feature type="topological domain" description="Mitochondrial matrix" evidence="2">
    <location>
        <begin position="33"/>
        <end position="73"/>
    </location>
</feature>
<feature type="transmembrane region" description="Helical; Name=2" evidence="6">
    <location>
        <begin position="74"/>
        <end position="96"/>
    </location>
</feature>
<feature type="topological domain" description="Mitochondrial intermembrane" evidence="2">
    <location>
        <begin position="97"/>
        <end position="116"/>
    </location>
</feature>
<feature type="transmembrane region" description="Helical; Name=3" evidence="6">
    <location>
        <begin position="117"/>
        <end position="133"/>
    </location>
</feature>
<feature type="topological domain" description="Mitochondrial matrix" evidence="2">
    <location>
        <begin position="134"/>
        <end position="178"/>
    </location>
</feature>
<feature type="transmembrane region" description="Helical; Name=4" evidence="6">
    <location>
        <begin position="179"/>
        <end position="195"/>
    </location>
</feature>
<feature type="topological domain" description="Mitochondrial intermembrane" evidence="2">
    <location>
        <begin position="196"/>
        <end position="212"/>
    </location>
</feature>
<feature type="transmembrane region" description="Helical; Name=5" evidence="6">
    <location>
        <begin position="213"/>
        <end position="232"/>
    </location>
</feature>
<feature type="topological domain" description="Mitochondrial matrix" evidence="2">
    <location>
        <begin position="233"/>
        <end position="266"/>
    </location>
</feature>
<feature type="transmembrane region" description="Helical; Name=6" evidence="6">
    <location>
        <begin position="267"/>
        <end position="289"/>
    </location>
</feature>
<feature type="topological domain" description="Mitochondrial intermembrane" evidence="2">
    <location>
        <begin position="290"/>
        <end position="307"/>
    </location>
</feature>
<feature type="repeat" description="Solcar 1">
    <location>
        <begin position="11"/>
        <end position="102"/>
    </location>
</feature>
<feature type="repeat" description="Solcar 2">
    <location>
        <begin position="111"/>
        <end position="201"/>
    </location>
</feature>
<feature type="repeat" description="Solcar 3">
    <location>
        <begin position="210"/>
        <end position="295"/>
    </location>
</feature>
<feature type="binding site" evidence="4">
    <location>
        <position position="56"/>
    </location>
    <ligand>
        <name>fatty acid 16:0</name>
        <dbReference type="ChEBI" id="CHEBI:78123"/>
    </ligand>
</feature>
<feature type="binding site" evidence="4">
    <location>
        <position position="269"/>
    </location>
    <ligand>
        <name>fatty acid 16:0</name>
        <dbReference type="ChEBI" id="CHEBI:78123"/>
    </ligand>
</feature>
<feature type="modified residue" description="Cysteine sulfenic acid (-SOH)" evidence="3">
    <location>
        <position position="254"/>
    </location>
</feature>
<protein>
    <recommendedName>
        <fullName evidence="9">Mitochondrial brown fat uncoupling protein 1</fullName>
        <shortName evidence="9">UCP 1</shortName>
    </recommendedName>
    <alternativeName>
        <fullName evidence="4">Solute carrier family 25 member 7</fullName>
    </alternativeName>
    <alternativeName>
        <fullName evidence="1">Thermogenin</fullName>
    </alternativeName>
</protein>
<reference key="1">
    <citation type="journal article" date="2001" name="Physiol. Biochem. Zool.">
        <title>Tissue-specific expression and cold-induced mRNA levels of uncoupling proteins in the Djungarian hamster.</title>
        <authorList>
            <person name="von Praun C."/>
            <person name="Burkert M."/>
            <person name="Gessner M."/>
            <person name="Klingenspor M."/>
        </authorList>
    </citation>
    <scope>NUCLEOTIDE SEQUENCE [MRNA]</scope>
    <scope>TISSUE SPECIFICITY</scope>
    <source>
        <tissue>Brown adipose tissue</tissue>
    </source>
</reference>